<accession>Q9M5I8</accession>
<sequence>MLVYQDLVSGDELLSDSFPYKEIENGMIWEVEGKWVVKGAVDVDIGANPSAEGGGEDEGVDDQAVKVVDIVDTFRLQEQPSMDKKVFLSCIKKYIKKLTPLLQGEQQEAFKNKIEGAVKYLLPKVKDLQFFVGESMADDSAMVFAYYKEGATDPTFLYIAPGLKEVKC</sequence>
<proteinExistence type="evidence at transcript level"/>
<gene>
    <name type="primary">TCTP</name>
</gene>
<evidence type="ECO:0000250" key="1"/>
<evidence type="ECO:0000255" key="2">
    <source>
        <dbReference type="PROSITE-ProRule" id="PRU01133"/>
    </source>
</evidence>
<protein>
    <recommendedName>
        <fullName>Translationally-controlled tumor protein homolog</fullName>
        <shortName>TCTP</shortName>
    </recommendedName>
</protein>
<name>TCTP_CUCME</name>
<keyword id="KW-0106">Calcium</keyword>
<keyword id="KW-0963">Cytoplasm</keyword>
<keyword id="KW-1185">Reference proteome</keyword>
<feature type="chain" id="PRO_0000211299" description="Translationally-controlled tumor protein homolog">
    <location>
        <begin position="1"/>
        <end position="168"/>
    </location>
</feature>
<feature type="domain" description="TCTP" evidence="2">
    <location>
        <begin position="1"/>
        <end position="168"/>
    </location>
</feature>
<organism>
    <name type="scientific">Cucumis melo</name>
    <name type="common">Muskmelon</name>
    <dbReference type="NCBI Taxonomy" id="3656"/>
    <lineage>
        <taxon>Eukaryota</taxon>
        <taxon>Viridiplantae</taxon>
        <taxon>Streptophyta</taxon>
        <taxon>Embryophyta</taxon>
        <taxon>Tracheophyta</taxon>
        <taxon>Spermatophyta</taxon>
        <taxon>Magnoliopsida</taxon>
        <taxon>eudicotyledons</taxon>
        <taxon>Gunneridae</taxon>
        <taxon>Pentapetalae</taxon>
        <taxon>rosids</taxon>
        <taxon>fabids</taxon>
        <taxon>Cucurbitales</taxon>
        <taxon>Cucurbitaceae</taxon>
        <taxon>Benincaseae</taxon>
        <taxon>Cucumis</taxon>
    </lineage>
</organism>
<dbReference type="EMBL" id="AF230211">
    <property type="protein sequence ID" value="AAF40198.1"/>
    <property type="molecule type" value="mRNA"/>
</dbReference>
<dbReference type="RefSeq" id="NP_001284461.1">
    <property type="nucleotide sequence ID" value="NM_001297532.1"/>
</dbReference>
<dbReference type="SMR" id="Q9M5I8"/>
<dbReference type="GeneID" id="103483849"/>
<dbReference type="KEGG" id="cmo:103483849"/>
<dbReference type="eggNOG" id="KOG1727">
    <property type="taxonomic scope" value="Eukaryota"/>
</dbReference>
<dbReference type="InParanoid" id="Q9M5I8"/>
<dbReference type="OrthoDB" id="799413at71240"/>
<dbReference type="PhylomeDB" id="Q9M5I8"/>
<dbReference type="Proteomes" id="UP000089565">
    <property type="component" value="Unplaced"/>
</dbReference>
<dbReference type="Proteomes" id="UP000596662">
    <property type="component" value="Unplaced"/>
</dbReference>
<dbReference type="GO" id="GO:0005737">
    <property type="term" value="C:cytoplasm"/>
    <property type="evidence" value="ECO:0007669"/>
    <property type="project" value="UniProtKB-SubCell"/>
</dbReference>
<dbReference type="GO" id="GO:0005509">
    <property type="term" value="F:calcium ion binding"/>
    <property type="evidence" value="ECO:0007669"/>
    <property type="project" value="TreeGrafter"/>
</dbReference>
<dbReference type="FunFam" id="2.170.150.10:FF:000003">
    <property type="entry name" value="Translationally-controlled tumor protein homolog"/>
    <property type="match status" value="1"/>
</dbReference>
<dbReference type="Gene3D" id="2.170.150.10">
    <property type="entry name" value="Metal Binding Protein, Guanine Nucleotide Exchange Factor, Chain A"/>
    <property type="match status" value="1"/>
</dbReference>
<dbReference type="InterPro" id="IPR011057">
    <property type="entry name" value="Mss4-like_sf"/>
</dbReference>
<dbReference type="InterPro" id="IPR011323">
    <property type="entry name" value="Mss4/transl-control_tumour"/>
</dbReference>
<dbReference type="InterPro" id="IPR034737">
    <property type="entry name" value="TCTP"/>
</dbReference>
<dbReference type="InterPro" id="IPR018103">
    <property type="entry name" value="Translation_control_tumour_CS"/>
</dbReference>
<dbReference type="InterPro" id="IPR018105">
    <property type="entry name" value="Translational_control_tumour_p"/>
</dbReference>
<dbReference type="PANTHER" id="PTHR11991:SF17">
    <property type="entry name" value="TRANSLATIONALLY CONTROLLED TUMOR PROTEIN 2"/>
    <property type="match status" value="1"/>
</dbReference>
<dbReference type="PANTHER" id="PTHR11991">
    <property type="entry name" value="TRANSLATIONALLY CONTROLLED TUMOR PROTEIN-RELATED"/>
    <property type="match status" value="1"/>
</dbReference>
<dbReference type="Pfam" id="PF00838">
    <property type="entry name" value="TCTP"/>
    <property type="match status" value="1"/>
</dbReference>
<dbReference type="PRINTS" id="PR01653">
    <property type="entry name" value="TCTPROTEIN"/>
</dbReference>
<dbReference type="SUPFAM" id="SSF51316">
    <property type="entry name" value="Mss4-like"/>
    <property type="match status" value="1"/>
</dbReference>
<dbReference type="PROSITE" id="PS01002">
    <property type="entry name" value="TCTP_1"/>
    <property type="match status" value="1"/>
</dbReference>
<dbReference type="PROSITE" id="PS01003">
    <property type="entry name" value="TCTP_2"/>
    <property type="match status" value="1"/>
</dbReference>
<dbReference type="PROSITE" id="PS51797">
    <property type="entry name" value="TCTP_3"/>
    <property type="match status" value="1"/>
</dbReference>
<comment type="function">
    <text evidence="1">Involved in calcium binding and microtubule stabilization.</text>
</comment>
<comment type="subcellular location">
    <subcellularLocation>
        <location evidence="1">Cytoplasm</location>
    </subcellularLocation>
</comment>
<comment type="similarity">
    <text evidence="2">Belongs to the TCTP family.</text>
</comment>
<reference key="1">
    <citation type="submission" date="2000-01" db="EMBL/GenBank/DDBJ databases">
        <title>Identification of a TCTP-related cDNA from melon fruit and expression studies.</title>
        <authorList>
            <person name="Gomez-Lim M.A."/>
            <person name="Lester E."/>
        </authorList>
    </citation>
    <scope>NUCLEOTIDE SEQUENCE [MRNA]</scope>
</reference>